<accession>A0A1D8PIC7</accession>
<dbReference type="EC" id="1.3.1.70" evidence="6"/>
<dbReference type="EMBL" id="CP017624">
    <property type="protein sequence ID" value="AOW27923.1"/>
    <property type="molecule type" value="Genomic_DNA"/>
</dbReference>
<dbReference type="RefSeq" id="XP_710679.2">
    <property type="nucleotide sequence ID" value="XM_705587.2"/>
</dbReference>
<dbReference type="SMR" id="A0A1D8PIC7"/>
<dbReference type="FunCoup" id="A0A1D8PIC7">
    <property type="interactions" value="505"/>
</dbReference>
<dbReference type="STRING" id="237561.A0A1D8PIC7"/>
<dbReference type="EnsemblFungi" id="C2_09400C_A-T">
    <property type="protein sequence ID" value="C2_09400C_A-T-p1"/>
    <property type="gene ID" value="C2_09400C_A"/>
</dbReference>
<dbReference type="GeneID" id="3647716"/>
<dbReference type="KEGG" id="cal:CAALFM_C209400CA"/>
<dbReference type="CGD" id="CAL0000185086">
    <property type="gene designation" value="ERG24"/>
</dbReference>
<dbReference type="VEuPathDB" id="FungiDB:C2_09400C_A"/>
<dbReference type="eggNOG" id="KOG1435">
    <property type="taxonomic scope" value="Eukaryota"/>
</dbReference>
<dbReference type="InParanoid" id="A0A1D8PIC7"/>
<dbReference type="OrthoDB" id="10262235at2759"/>
<dbReference type="UniPathway" id="UPA00770">
    <property type="reaction ID" value="UER00755"/>
</dbReference>
<dbReference type="Proteomes" id="UP000000559">
    <property type="component" value="Chromosome 2"/>
</dbReference>
<dbReference type="GO" id="GO:0005789">
    <property type="term" value="C:endoplasmic reticulum membrane"/>
    <property type="evidence" value="ECO:0000318"/>
    <property type="project" value="GO_Central"/>
</dbReference>
<dbReference type="GO" id="GO:0050613">
    <property type="term" value="F:Delta14-sterol reductase activity"/>
    <property type="evidence" value="ECO:0000316"/>
    <property type="project" value="CGD"/>
</dbReference>
<dbReference type="GO" id="GO:0006696">
    <property type="term" value="P:ergosterol biosynthetic process"/>
    <property type="evidence" value="ECO:0000316"/>
    <property type="project" value="CGD"/>
</dbReference>
<dbReference type="GO" id="GO:0036180">
    <property type="term" value="P:filamentous growth of a population of unicellular organisms in response to biotic stimulus"/>
    <property type="evidence" value="ECO:0000315"/>
    <property type="project" value="CGD"/>
</dbReference>
<dbReference type="FunFam" id="1.20.120.1630:FF:000009">
    <property type="entry name" value="C-14 sterol reductase"/>
    <property type="match status" value="1"/>
</dbReference>
<dbReference type="Gene3D" id="1.20.120.1630">
    <property type="match status" value="1"/>
</dbReference>
<dbReference type="InterPro" id="IPR001171">
    <property type="entry name" value="ERG24_DHCR-like"/>
</dbReference>
<dbReference type="InterPro" id="IPR018083">
    <property type="entry name" value="Sterol_reductase_CS"/>
</dbReference>
<dbReference type="PANTHER" id="PTHR21257">
    <property type="entry name" value="DELTA(14)-STEROL REDUCTASE"/>
    <property type="match status" value="1"/>
</dbReference>
<dbReference type="PANTHER" id="PTHR21257:SF52">
    <property type="entry name" value="DELTA(14)-STEROL REDUCTASE TM7SF2"/>
    <property type="match status" value="1"/>
</dbReference>
<dbReference type="Pfam" id="PF01222">
    <property type="entry name" value="ERG4_ERG24"/>
    <property type="match status" value="1"/>
</dbReference>
<dbReference type="PROSITE" id="PS01017">
    <property type="entry name" value="STEROL_REDUCT_1"/>
    <property type="match status" value="1"/>
</dbReference>
<dbReference type="PROSITE" id="PS01018">
    <property type="entry name" value="STEROL_REDUCT_2"/>
    <property type="match status" value="1"/>
</dbReference>
<keyword id="KW-0256">Endoplasmic reticulum</keyword>
<keyword id="KW-0444">Lipid biosynthesis</keyword>
<keyword id="KW-0443">Lipid metabolism</keyword>
<keyword id="KW-0472">Membrane</keyword>
<keyword id="KW-0521">NADP</keyword>
<keyword id="KW-0560">Oxidoreductase</keyword>
<keyword id="KW-1185">Reference proteome</keyword>
<keyword id="KW-0752">Steroid biosynthesis</keyword>
<keyword id="KW-0753">Steroid metabolism</keyword>
<keyword id="KW-0756">Sterol biosynthesis</keyword>
<keyword id="KW-1207">Sterol metabolism</keyword>
<keyword id="KW-0812">Transmembrane</keyword>
<keyword id="KW-1133">Transmembrane helix</keyword>
<comment type="function">
    <text evidence="3 5">C-14 sterol reductase; part of the third module of ergosterol biosynthesis pathway that includes the late steps of the pathway (PubMed:11897574). ERG24 reduces the C14=C15 double bond of 4,4-dimethyl-cholesta-8,14,24-trienol to produce 4,4-dimethyl-cholesta-8,24-dienol (PubMed:11897574). The third module or late pathway involves the ergosterol synthesis itself through consecutive reactions that mainly occur in the endoplasmic reticulum (ER) membrane. Firstly, the squalene synthase ERG9 catalyzes the condensation of 2 farnesyl pyrophosphate moieties to form squalene, which is the precursor of all steroids. Squalene synthase is crucial for balancing the incorporation of farnesyl diphosphate (FPP) into sterol and nonsterol isoprene synthesis. Secondly, the squalene epoxidase ERG1 catalyzes the stereospecific oxidation of squalene to (S)-2,3-epoxysqualene, which is considered to be a rate-limiting enzyme in steroid biosynthesis. Then, the lanosterol synthase ERG7 catalyzes the cyclization of (S)-2,3 oxidosqualene to lanosterol, a reaction that forms the sterol core. In the next steps, lanosterol is transformed to zymosterol through a complex process involving various demethylation, reduction and desaturation reactions. The lanosterol 14-alpha-demethylase ERG11 (also known as CYP51) catalyzes C14-demethylation of lanosterol to produce 4,4'-dimethyl cholesta-8,14,24-triene-3-beta-ol, which is critical for ergosterol biosynthesis. The C-14 reductase ERG24 reduces the C14=C15 double bond of 4,4-dimethyl-cholesta-8,14,24-trienol to produce 4,4-dimethyl-cholesta-8,24-dienol. 4,4-dimethyl-cholesta-8,24-dienol is substrate of the C-4 demethylation complex ERG25-ERG26-ERG27 in which ERG25 catalyzes the three-step monooxygenation required for the demethylation of 4,4-dimethyl and 4alpha-methylsterols, ERG26 catalyzes the oxidative decarboxylation that results in a reduction of the 3-beta-hydroxy group at the C-3 carbon to an oxo group, and ERG27 is responsible for the reduction of the keto group on the C-3. ERG28 has a role as a scaffold to help anchor ERG25, ERG26 and ERG27 to the endoplasmic reticulum and ERG29 regulates the activity of the iron-containing C4-methylsterol oxidase ERG25. Then, the sterol 24-C-methyltransferase ERG6 catalyzes the methyl transfer from S-adenosyl-methionine to the C-24 of zymosterol to form fecosterol. The C-8 sterol isomerase ERG2 catalyzes the reaction which results in unsaturation at C-7 in the B ring of sterols and thus converts fecosterol to episterol. The sterol-C5-desaturase ERG3 then catalyzes the introduction of a C-5 double bond in the B ring to produce 5-dehydroepisterol. The C-22 sterol desaturase ERG5 further converts 5-dehydroepisterol into ergosta-5,7,22,24(28)-tetraen-3beta-ol by forming the C-22(23) double bond in the sterol side chain. Finally, ergosta-5,7,22,24(28)-tetraen-3beta-ol is substrate of the C-24(28) sterol reductase ERG4 to produce ergosterol (Probable).</text>
</comment>
<comment type="catalytic activity">
    <reaction evidence="6">
        <text>4,4-dimethyl-5alpha-cholesta-8,24-dien-3beta-ol + NADP(+) = 4,4-dimethyl-5alpha-cholesta-8,14,24-trien-3beta-ol + NADPH + H(+)</text>
        <dbReference type="Rhea" id="RHEA:18561"/>
        <dbReference type="ChEBI" id="CHEBI:15378"/>
        <dbReference type="ChEBI" id="CHEBI:17813"/>
        <dbReference type="ChEBI" id="CHEBI:18364"/>
        <dbReference type="ChEBI" id="CHEBI:57783"/>
        <dbReference type="ChEBI" id="CHEBI:58349"/>
        <dbReference type="EC" id="1.3.1.70"/>
    </reaction>
    <physiologicalReaction direction="right-to-left" evidence="6">
        <dbReference type="Rhea" id="RHEA:18563"/>
    </physiologicalReaction>
</comment>
<comment type="pathway">
    <text evidence="6">Steroid biosynthesis; zymosterol biosynthesis; zymosterol from lanosterol: step 2/6.</text>
</comment>
<comment type="subcellular location">
    <subcellularLocation>
        <location evidence="5">Endoplasmic reticulum membrane</location>
        <topology evidence="2">Multi-pass membrane protein</topology>
    </subcellularLocation>
</comment>
<comment type="disruption phenotype">
    <text evidence="3">Leads to the accumulation of ignosterol (ergosta-8,14-dienol), and of a new sterol, ergosta-8,14,22-trienol (PubMed:11897574). Results in slow growth and significant increased sensitivity to an allylamine antifungal and to selected cellular inhibitors including cycloheximide, cerulenin, fluphenazine, and brefeldin A (PubMed:11897574). Slightly increases resistance to azoles (PubMed:11897574). Significantly reduces pathogenicity in a mouse model system and fails to produce germ tubes upon incubation in human serum (PubMed:11897574).</text>
</comment>
<comment type="similarity">
    <text evidence="5">Belongs to the ERG4/ERG24 family.</text>
</comment>
<reference key="1">
    <citation type="journal article" date="2004" name="Proc. Natl. Acad. Sci. U.S.A.">
        <title>The diploid genome sequence of Candida albicans.</title>
        <authorList>
            <person name="Jones T."/>
            <person name="Federspiel N.A."/>
            <person name="Chibana H."/>
            <person name="Dungan J."/>
            <person name="Kalman S."/>
            <person name="Magee B.B."/>
            <person name="Newport G."/>
            <person name="Thorstenson Y.R."/>
            <person name="Agabian N."/>
            <person name="Magee P.T."/>
            <person name="Davis R.W."/>
            <person name="Scherer S."/>
        </authorList>
    </citation>
    <scope>NUCLEOTIDE SEQUENCE [LARGE SCALE GENOMIC DNA]</scope>
    <source>
        <strain>SC5314 / ATCC MYA-2876</strain>
    </source>
</reference>
<reference key="2">
    <citation type="journal article" date="2007" name="Genome Biol.">
        <title>Assembly of the Candida albicans genome into sixteen supercontigs aligned on the eight chromosomes.</title>
        <authorList>
            <person name="van het Hoog M."/>
            <person name="Rast T.J."/>
            <person name="Martchenko M."/>
            <person name="Grindle S."/>
            <person name="Dignard D."/>
            <person name="Hogues H."/>
            <person name="Cuomo C."/>
            <person name="Berriman M."/>
            <person name="Scherer S."/>
            <person name="Magee B.B."/>
            <person name="Whiteway M."/>
            <person name="Chibana H."/>
            <person name="Nantel A."/>
            <person name="Magee P.T."/>
        </authorList>
    </citation>
    <scope>GENOME REANNOTATION</scope>
    <source>
        <strain>SC5314 / ATCC MYA-2876</strain>
    </source>
</reference>
<reference key="3">
    <citation type="journal article" date="2013" name="Genome Biol.">
        <title>Assembly of a phased diploid Candida albicans genome facilitates allele-specific measurements and provides a simple model for repeat and indel structure.</title>
        <authorList>
            <person name="Muzzey D."/>
            <person name="Schwartz K."/>
            <person name="Weissman J.S."/>
            <person name="Sherlock G."/>
        </authorList>
    </citation>
    <scope>NUCLEOTIDE SEQUENCE [LARGE SCALE GENOMIC DNA]</scope>
    <scope>GENOME REANNOTATION</scope>
    <source>
        <strain>SC5314 / ATCC MYA-2876</strain>
    </source>
</reference>
<reference key="4">
    <citation type="journal article" date="2002" name="Antimicrob. Agents Chemother.">
        <title>Candida albicans sterol C-14 reductase, encoded by the ERG24 gene, as a potential antifungal target site.</title>
        <authorList>
            <person name="Jia N."/>
            <person name="Arthington-Skaggs B."/>
            <person name="Lee W."/>
            <person name="Pierson C.A."/>
            <person name="Lees N.D."/>
            <person name="Eckstein J."/>
            <person name="Barbuch R."/>
            <person name="Bard M."/>
        </authorList>
    </citation>
    <scope>FUNCTION</scope>
    <scope>DISRUPTION PHENOTYPE</scope>
    <scope>PATHWAY</scope>
</reference>
<organism>
    <name type="scientific">Candida albicans (strain SC5314 / ATCC MYA-2876)</name>
    <name type="common">Yeast</name>
    <dbReference type="NCBI Taxonomy" id="237561"/>
    <lineage>
        <taxon>Eukaryota</taxon>
        <taxon>Fungi</taxon>
        <taxon>Dikarya</taxon>
        <taxon>Ascomycota</taxon>
        <taxon>Saccharomycotina</taxon>
        <taxon>Pichiomycetes</taxon>
        <taxon>Debaryomycetaceae</taxon>
        <taxon>Candida/Lodderomyces clade</taxon>
        <taxon>Candida</taxon>
    </lineage>
</organism>
<sequence length="448" mass="51492">MKSSKLNPVTTHKEFNGISGALGITIGLPTLTVLFYLLCNQTYSIHGINVDFAKIKSQLPITQDELWQLVFDKTCWSAYLAWFFILVILDYLLPGKSLNGVKLRDGTVLNYKINGLSMSSLLIVLLLARLFQSNSDSSLEYYLPELQFIYDNQLQLIIICFLFSFMLAVFVYIISFIPLAKPNGIGTKERILSINGNTGNPFYDWFIGRELNPRIGSWDIKLFCELRPGMLLWLLINLSCLHYQYHNLGYVTDSMIVVNLLQAFYIFDGVLNEEGCLTMIDITTDGFGFMLSFGDLAWVPWTYSLQARYLSIKGNEVNLGWTLSLLIVGLQALGFYIFRSANKQKSDFRQGKLPHLKSIQTKTGSKLLVEGWWGLSQHINYLGDWLIGLSWCLPTGFQTPLTYFYVIYFASLLIHRQVRDEMKCRAKYGEDWEKYEKLVPYKIIPYVY</sequence>
<evidence type="ECO:0000250" key="1">
    <source>
        <dbReference type="UniProtKB" id="G4SW86"/>
    </source>
</evidence>
<evidence type="ECO:0000255" key="2"/>
<evidence type="ECO:0000269" key="3">
    <source>
    </source>
</evidence>
<evidence type="ECO:0000303" key="4">
    <source>
    </source>
</evidence>
<evidence type="ECO:0000305" key="5"/>
<evidence type="ECO:0000305" key="6">
    <source>
    </source>
</evidence>
<gene>
    <name evidence="4" type="primary">ERG24</name>
    <name type="ordered locus">orf19.1598</name>
    <name type="ORF">CAALFM_C209400CA</name>
</gene>
<protein>
    <recommendedName>
        <fullName evidence="4">Delta(14)-sterol reductase ERG24</fullName>
        <ecNumber evidence="6">1.3.1.70</ecNumber>
    </recommendedName>
    <alternativeName>
        <fullName evidence="4">C-14 sterol reductase ERG24</fullName>
    </alternativeName>
    <alternativeName>
        <fullName evidence="4">Sterol C14-reductase ERG24</fullName>
    </alternativeName>
</protein>
<feature type="chain" id="PRO_0000454174" description="Delta(14)-sterol reductase ERG24">
    <location>
        <begin position="1"/>
        <end position="448"/>
    </location>
</feature>
<feature type="transmembrane region" description="Helical" evidence="2">
    <location>
        <begin position="18"/>
        <end position="38"/>
    </location>
</feature>
<feature type="transmembrane region" description="Helical" evidence="2">
    <location>
        <begin position="75"/>
        <end position="95"/>
    </location>
</feature>
<feature type="transmembrane region" description="Helical" evidence="2">
    <location>
        <begin position="108"/>
        <end position="128"/>
    </location>
</feature>
<feature type="transmembrane region" description="Helical" evidence="2">
    <location>
        <begin position="157"/>
        <end position="177"/>
    </location>
</feature>
<feature type="transmembrane region" description="Helical" evidence="2">
    <location>
        <begin position="251"/>
        <end position="271"/>
    </location>
</feature>
<feature type="transmembrane region" description="Helical" evidence="2">
    <location>
        <begin position="279"/>
        <end position="299"/>
    </location>
</feature>
<feature type="transmembrane region" description="Helical" evidence="2">
    <location>
        <begin position="318"/>
        <end position="338"/>
    </location>
</feature>
<feature type="transmembrane region" description="Helical" evidence="2">
    <location>
        <begin position="394"/>
        <end position="414"/>
    </location>
</feature>
<feature type="binding site" evidence="1">
    <location>
        <position position="345"/>
    </location>
    <ligand>
        <name>NADP(+)</name>
        <dbReference type="ChEBI" id="CHEBI:58349"/>
    </ligand>
</feature>
<feature type="binding site" evidence="1">
    <location>
        <position position="349"/>
    </location>
    <ligand>
        <name>NADP(+)</name>
        <dbReference type="ChEBI" id="CHEBI:58349"/>
    </ligand>
</feature>
<feature type="binding site" evidence="1">
    <location>
        <position position="368"/>
    </location>
    <ligand>
        <name>NADP(+)</name>
        <dbReference type="ChEBI" id="CHEBI:58349"/>
    </ligand>
</feature>
<feature type="binding site" evidence="1">
    <location>
        <position position="373"/>
    </location>
    <ligand>
        <name>NADP(+)</name>
        <dbReference type="ChEBI" id="CHEBI:58349"/>
    </ligand>
</feature>
<feature type="binding site" evidence="1">
    <location>
        <begin position="380"/>
        <end position="381"/>
    </location>
    <ligand>
        <name>NADP(+)</name>
        <dbReference type="ChEBI" id="CHEBI:58349"/>
    </ligand>
</feature>
<feature type="binding site" evidence="1">
    <location>
        <position position="420"/>
    </location>
    <ligand>
        <name>NADP(+)</name>
        <dbReference type="ChEBI" id="CHEBI:58349"/>
    </ligand>
</feature>
<feature type="binding site" evidence="1">
    <location>
        <begin position="424"/>
        <end position="428"/>
    </location>
    <ligand>
        <name>NADP(+)</name>
        <dbReference type="ChEBI" id="CHEBI:58349"/>
    </ligand>
</feature>
<feature type="binding site" evidence="1">
    <location>
        <position position="435"/>
    </location>
    <ligand>
        <name>NADP(+)</name>
        <dbReference type="ChEBI" id="CHEBI:58349"/>
    </ligand>
</feature>
<name>ERG24_CANAL</name>
<proteinExistence type="inferred from homology"/>